<accession>Q5X2E5</accession>
<proteinExistence type="inferred from homology"/>
<gene>
    <name evidence="1" type="primary">nhaA</name>
    <name type="ordered locus">lpp2448</name>
</gene>
<dbReference type="EMBL" id="CR628336">
    <property type="protein sequence ID" value="CAH13601.1"/>
    <property type="molecule type" value="Genomic_DNA"/>
</dbReference>
<dbReference type="RefSeq" id="WP_015961564.1">
    <property type="nucleotide sequence ID" value="NC_006368.1"/>
</dbReference>
<dbReference type="SMR" id="Q5X2E5"/>
<dbReference type="KEGG" id="lpp:lpp2448"/>
<dbReference type="LegioList" id="lpp2448"/>
<dbReference type="HOGENOM" id="CLU_015803_1_0_6"/>
<dbReference type="GO" id="GO:0005886">
    <property type="term" value="C:plasma membrane"/>
    <property type="evidence" value="ECO:0007669"/>
    <property type="project" value="UniProtKB-SubCell"/>
</dbReference>
<dbReference type="GO" id="GO:0015385">
    <property type="term" value="F:sodium:proton antiporter activity"/>
    <property type="evidence" value="ECO:0007669"/>
    <property type="project" value="TreeGrafter"/>
</dbReference>
<dbReference type="GO" id="GO:0006885">
    <property type="term" value="P:regulation of pH"/>
    <property type="evidence" value="ECO:0007669"/>
    <property type="project" value="InterPro"/>
</dbReference>
<dbReference type="Gene3D" id="1.20.1530.10">
    <property type="entry name" value="Na+/H+ antiporter like domain"/>
    <property type="match status" value="1"/>
</dbReference>
<dbReference type="HAMAP" id="MF_01844">
    <property type="entry name" value="NhaA"/>
    <property type="match status" value="1"/>
</dbReference>
<dbReference type="InterPro" id="IPR023171">
    <property type="entry name" value="Na/H_antiporter_dom_sf"/>
</dbReference>
<dbReference type="InterPro" id="IPR004670">
    <property type="entry name" value="NhaA"/>
</dbReference>
<dbReference type="NCBIfam" id="TIGR00773">
    <property type="entry name" value="NhaA"/>
    <property type="match status" value="1"/>
</dbReference>
<dbReference type="NCBIfam" id="NF007111">
    <property type="entry name" value="PRK09560.1"/>
    <property type="match status" value="1"/>
</dbReference>
<dbReference type="NCBIfam" id="NF007112">
    <property type="entry name" value="PRK09561.1"/>
    <property type="match status" value="1"/>
</dbReference>
<dbReference type="NCBIfam" id="NF011427">
    <property type="entry name" value="PRK14854.1"/>
    <property type="match status" value="1"/>
</dbReference>
<dbReference type="PANTHER" id="PTHR30341:SF0">
    <property type="entry name" value="NA(+)_H(+) ANTIPORTER NHAA"/>
    <property type="match status" value="1"/>
</dbReference>
<dbReference type="PANTHER" id="PTHR30341">
    <property type="entry name" value="SODIUM ION/PROTON ANTIPORTER NHAA-RELATED"/>
    <property type="match status" value="1"/>
</dbReference>
<dbReference type="Pfam" id="PF06965">
    <property type="entry name" value="Na_H_antiport_1"/>
    <property type="match status" value="1"/>
</dbReference>
<sequence>MNKSGSFYNLETIGGILLFIAAVIAIIIANSPFRVGYEYFLSINGSVSVGNLSITKPLLLWINDGLMAIYFLLIGLEIKREVNRGILSDKTNLLVPALTALAGLIFPALIFIFFNAHHPVYLKGWAIPTATDIAFTLGIVSLLGSRVPFSLKILLTAIAIFDDIAAIVIIALFYTEQLSLLSLSLALVFTLILIGLNYFKCRRISVFMLFGVALWIAVLKSGVHATLAGIVIAMTIPDEGKESMLARLEDGLHHWVVFLILPLFAFANAGVSFVGLDASMFTHPVVLGIGLGLFLGKQLGIFLSLGYFVQFKKFLKADKVNLAQVYGIALICGVGFTMSLFIGSLAYQNYDLSLMPMVKIGVVLGSFIAGLTGFLVLKLKQQ</sequence>
<organism>
    <name type="scientific">Legionella pneumophila (strain Paris)</name>
    <dbReference type="NCBI Taxonomy" id="297246"/>
    <lineage>
        <taxon>Bacteria</taxon>
        <taxon>Pseudomonadati</taxon>
        <taxon>Pseudomonadota</taxon>
        <taxon>Gammaproteobacteria</taxon>
        <taxon>Legionellales</taxon>
        <taxon>Legionellaceae</taxon>
        <taxon>Legionella</taxon>
    </lineage>
</organism>
<reference key="1">
    <citation type="journal article" date="2004" name="Nat. Genet.">
        <title>Evidence in the Legionella pneumophila genome for exploitation of host cell functions and high genome plasticity.</title>
        <authorList>
            <person name="Cazalet C."/>
            <person name="Rusniok C."/>
            <person name="Brueggemann H."/>
            <person name="Zidane N."/>
            <person name="Magnier A."/>
            <person name="Ma L."/>
            <person name="Tichit M."/>
            <person name="Jarraud S."/>
            <person name="Bouchier C."/>
            <person name="Vandenesch F."/>
            <person name="Kunst F."/>
            <person name="Etienne J."/>
            <person name="Glaser P."/>
            <person name="Buchrieser C."/>
        </authorList>
    </citation>
    <scope>NUCLEOTIDE SEQUENCE [LARGE SCALE GENOMIC DNA]</scope>
    <source>
        <strain>Paris</strain>
    </source>
</reference>
<protein>
    <recommendedName>
        <fullName evidence="1">Na(+)/H(+) antiporter NhaA</fullName>
    </recommendedName>
    <alternativeName>
        <fullName evidence="1">Sodium/proton antiporter NhaA</fullName>
    </alternativeName>
</protein>
<feature type="chain" id="PRO_0000334331" description="Na(+)/H(+) antiporter NhaA">
    <location>
        <begin position="1"/>
        <end position="382"/>
    </location>
</feature>
<feature type="transmembrane region" description="Helical" evidence="1">
    <location>
        <begin position="13"/>
        <end position="33"/>
    </location>
</feature>
<feature type="transmembrane region" description="Helical" evidence="1">
    <location>
        <begin position="58"/>
        <end position="78"/>
    </location>
</feature>
<feature type="transmembrane region" description="Helical" evidence="1">
    <location>
        <begin position="94"/>
        <end position="114"/>
    </location>
</feature>
<feature type="transmembrane region" description="Helical" evidence="1">
    <location>
        <begin position="124"/>
        <end position="144"/>
    </location>
</feature>
<feature type="transmembrane region" description="Helical" evidence="1">
    <location>
        <begin position="153"/>
        <end position="173"/>
    </location>
</feature>
<feature type="transmembrane region" description="Helical" evidence="1">
    <location>
        <begin position="179"/>
        <end position="199"/>
    </location>
</feature>
<feature type="transmembrane region" description="Helical" evidence="1">
    <location>
        <begin position="204"/>
        <end position="224"/>
    </location>
</feature>
<feature type="transmembrane region" description="Helical" evidence="1">
    <location>
        <begin position="256"/>
        <end position="276"/>
    </location>
</feature>
<feature type="transmembrane region" description="Helical" evidence="1">
    <location>
        <begin position="285"/>
        <end position="305"/>
    </location>
</feature>
<feature type="transmembrane region" description="Helical" evidence="1">
    <location>
        <begin position="325"/>
        <end position="345"/>
    </location>
</feature>
<feature type="transmembrane region" description="Helical" evidence="1">
    <location>
        <begin position="357"/>
        <end position="377"/>
    </location>
</feature>
<comment type="function">
    <text evidence="1">Na(+)/H(+) antiporter that extrudes sodium in exchange for external protons.</text>
</comment>
<comment type="catalytic activity">
    <reaction evidence="1">
        <text>Na(+)(in) + 2 H(+)(out) = Na(+)(out) + 2 H(+)(in)</text>
        <dbReference type="Rhea" id="RHEA:29251"/>
        <dbReference type="ChEBI" id="CHEBI:15378"/>
        <dbReference type="ChEBI" id="CHEBI:29101"/>
    </reaction>
    <physiologicalReaction direction="left-to-right" evidence="1">
        <dbReference type="Rhea" id="RHEA:29252"/>
    </physiologicalReaction>
</comment>
<comment type="subcellular location">
    <subcellularLocation>
        <location evidence="1">Cell inner membrane</location>
        <topology evidence="1">Multi-pass membrane protein</topology>
    </subcellularLocation>
</comment>
<comment type="similarity">
    <text evidence="1">Belongs to the NhaA Na(+)/H(+) (TC 2.A.33) antiporter family.</text>
</comment>
<name>NHAA_LEGPA</name>
<keyword id="KW-0050">Antiport</keyword>
<keyword id="KW-0997">Cell inner membrane</keyword>
<keyword id="KW-1003">Cell membrane</keyword>
<keyword id="KW-0406">Ion transport</keyword>
<keyword id="KW-0472">Membrane</keyword>
<keyword id="KW-0915">Sodium</keyword>
<keyword id="KW-0739">Sodium transport</keyword>
<keyword id="KW-0812">Transmembrane</keyword>
<keyword id="KW-1133">Transmembrane helix</keyword>
<keyword id="KW-0813">Transport</keyword>
<evidence type="ECO:0000255" key="1">
    <source>
        <dbReference type="HAMAP-Rule" id="MF_01844"/>
    </source>
</evidence>